<sequence length="204" mass="23718">MTFKGFSKKDFKTMQISGLEARMTGIQNDIQPKFRAVGEELTTYLSAKLGDEMFLHIARHQRRSVNPPDSTWLAICHDKRGYKKHPHFQVGLFDKYLFIWLAFIYENEESLKIANRFLKEKKLLADLPDNFAISPDHTEEKTYPVHDGQLEATLERFRDVKKGEFLVGKIYLPDDNHLSPAKDFIKEAEMVLDELIPLYKAALQ</sequence>
<reference key="1">
    <citation type="journal article" date="2001" name="Science">
        <title>Comparative genomics of Listeria species.</title>
        <authorList>
            <person name="Glaser P."/>
            <person name="Frangeul L."/>
            <person name="Buchrieser C."/>
            <person name="Rusniok C."/>
            <person name="Amend A."/>
            <person name="Baquero F."/>
            <person name="Berche P."/>
            <person name="Bloecker H."/>
            <person name="Brandt P."/>
            <person name="Chakraborty T."/>
            <person name="Charbit A."/>
            <person name="Chetouani F."/>
            <person name="Couve E."/>
            <person name="de Daruvar A."/>
            <person name="Dehoux P."/>
            <person name="Domann E."/>
            <person name="Dominguez-Bernal G."/>
            <person name="Duchaud E."/>
            <person name="Durant L."/>
            <person name="Dussurget O."/>
            <person name="Entian K.-D."/>
            <person name="Fsihi H."/>
            <person name="Garcia-del Portillo F."/>
            <person name="Garrido P."/>
            <person name="Gautier L."/>
            <person name="Goebel W."/>
            <person name="Gomez-Lopez N."/>
            <person name="Hain T."/>
            <person name="Hauf J."/>
            <person name="Jackson D."/>
            <person name="Jones L.-M."/>
            <person name="Kaerst U."/>
            <person name="Kreft J."/>
            <person name="Kuhn M."/>
            <person name="Kunst F."/>
            <person name="Kurapkat G."/>
            <person name="Madueno E."/>
            <person name="Maitournam A."/>
            <person name="Mata Vicente J."/>
            <person name="Ng E."/>
            <person name="Nedjari H."/>
            <person name="Nordsiek G."/>
            <person name="Novella S."/>
            <person name="de Pablos B."/>
            <person name="Perez-Diaz J.-C."/>
            <person name="Purcell R."/>
            <person name="Remmel B."/>
            <person name="Rose M."/>
            <person name="Schlueter T."/>
            <person name="Simoes N."/>
            <person name="Tierrez A."/>
            <person name="Vazquez-Boland J.-A."/>
            <person name="Voss H."/>
            <person name="Wehland J."/>
            <person name="Cossart P."/>
        </authorList>
    </citation>
    <scope>NUCLEOTIDE SEQUENCE [LARGE SCALE GENOMIC DNA]</scope>
    <source>
        <strain>ATCC BAA-679 / EGD-e</strain>
    </source>
</reference>
<keyword id="KW-1185">Reference proteome</keyword>
<protein>
    <recommendedName>
        <fullName evidence="1">UPF0637 protein lmo1065</fullName>
    </recommendedName>
</protein>
<feature type="chain" id="PRO_0000348314" description="UPF0637 protein lmo1065">
    <location>
        <begin position="1"/>
        <end position="204"/>
    </location>
</feature>
<evidence type="ECO:0000255" key="1">
    <source>
        <dbReference type="HAMAP-Rule" id="MF_01851"/>
    </source>
</evidence>
<accession>Q8Y853</accession>
<organism>
    <name type="scientific">Listeria monocytogenes serovar 1/2a (strain ATCC BAA-679 / EGD-e)</name>
    <dbReference type="NCBI Taxonomy" id="169963"/>
    <lineage>
        <taxon>Bacteria</taxon>
        <taxon>Bacillati</taxon>
        <taxon>Bacillota</taxon>
        <taxon>Bacilli</taxon>
        <taxon>Bacillales</taxon>
        <taxon>Listeriaceae</taxon>
        <taxon>Listeria</taxon>
    </lineage>
</organism>
<comment type="similarity">
    <text evidence="1">Belongs to the UPF0637 family.</text>
</comment>
<dbReference type="EMBL" id="AL591977">
    <property type="protein sequence ID" value="CAC99143.1"/>
    <property type="molecule type" value="Genomic_DNA"/>
</dbReference>
<dbReference type="PIR" id="AI1207">
    <property type="entry name" value="AI1207"/>
</dbReference>
<dbReference type="RefSeq" id="NP_464590.1">
    <property type="nucleotide sequence ID" value="NC_003210.1"/>
</dbReference>
<dbReference type="RefSeq" id="WP_010989654.1">
    <property type="nucleotide sequence ID" value="NZ_CP149495.1"/>
</dbReference>
<dbReference type="SMR" id="Q8Y853"/>
<dbReference type="STRING" id="169963.gene:17593721"/>
<dbReference type="PaxDb" id="169963-lmo1065"/>
<dbReference type="EnsemblBacteria" id="CAC99143">
    <property type="protein sequence ID" value="CAC99143"/>
    <property type="gene ID" value="CAC99143"/>
</dbReference>
<dbReference type="GeneID" id="984607"/>
<dbReference type="KEGG" id="lmo:lmo1065"/>
<dbReference type="PATRIC" id="fig|169963.11.peg.1095"/>
<dbReference type="eggNOG" id="COG4493">
    <property type="taxonomic scope" value="Bacteria"/>
</dbReference>
<dbReference type="HOGENOM" id="CLU_096059_0_0_9"/>
<dbReference type="OrthoDB" id="9812818at2"/>
<dbReference type="PhylomeDB" id="Q8Y853"/>
<dbReference type="BioCyc" id="LMON169963:LMO1065-MONOMER"/>
<dbReference type="Proteomes" id="UP000000817">
    <property type="component" value="Chromosome"/>
</dbReference>
<dbReference type="Gene3D" id="3.30.930.20">
    <property type="entry name" value="Protein of unknown function DUF1054"/>
    <property type="match status" value="1"/>
</dbReference>
<dbReference type="HAMAP" id="MF_01851">
    <property type="entry name" value="UPF0637"/>
    <property type="match status" value="1"/>
</dbReference>
<dbReference type="InterPro" id="IPR009403">
    <property type="entry name" value="UPF0637"/>
</dbReference>
<dbReference type="InterPro" id="IPR053707">
    <property type="entry name" value="UPF0637_domain_sf"/>
</dbReference>
<dbReference type="Pfam" id="PF06335">
    <property type="entry name" value="DUF1054"/>
    <property type="match status" value="1"/>
</dbReference>
<dbReference type="PIRSF" id="PIRSF021332">
    <property type="entry name" value="DUF1054"/>
    <property type="match status" value="1"/>
</dbReference>
<dbReference type="SUPFAM" id="SSF142913">
    <property type="entry name" value="YktB/PF0168-like"/>
    <property type="match status" value="1"/>
</dbReference>
<gene>
    <name type="ordered locus">lmo1065</name>
</gene>
<name>Y1065_LISMO</name>
<proteinExistence type="inferred from homology"/>